<dbReference type="EC" id="4.2.1.59" evidence="1"/>
<dbReference type="EC" id="5.3.3.14" evidence="1"/>
<dbReference type="EMBL" id="AE008922">
    <property type="protein sequence ID" value="AAM39898.1"/>
    <property type="molecule type" value="Genomic_DNA"/>
</dbReference>
<dbReference type="RefSeq" id="NP_635974.1">
    <property type="nucleotide sequence ID" value="NC_003902.1"/>
</dbReference>
<dbReference type="RefSeq" id="WP_011035827.1">
    <property type="nucleotide sequence ID" value="NC_003902.1"/>
</dbReference>
<dbReference type="SMR" id="Q8PCW9"/>
<dbReference type="STRING" id="190485.XCC0582"/>
<dbReference type="EnsemblBacteria" id="AAM39898">
    <property type="protein sequence ID" value="AAM39898"/>
    <property type="gene ID" value="XCC0582"/>
</dbReference>
<dbReference type="GeneID" id="58014856"/>
<dbReference type="KEGG" id="xcc:XCC0582"/>
<dbReference type="PATRIC" id="fig|190485.4.peg.641"/>
<dbReference type="eggNOG" id="COG0764">
    <property type="taxonomic scope" value="Bacteria"/>
</dbReference>
<dbReference type="HOGENOM" id="CLU_097925_0_0_6"/>
<dbReference type="OrthoDB" id="9786735at2"/>
<dbReference type="UniPathway" id="UPA00094"/>
<dbReference type="Proteomes" id="UP000001010">
    <property type="component" value="Chromosome"/>
</dbReference>
<dbReference type="GO" id="GO:0005737">
    <property type="term" value="C:cytoplasm"/>
    <property type="evidence" value="ECO:0007669"/>
    <property type="project" value="UniProtKB-SubCell"/>
</dbReference>
<dbReference type="GO" id="GO:0019171">
    <property type="term" value="F:(3R)-hydroxyacyl-[acyl-carrier-protein] dehydratase activity"/>
    <property type="evidence" value="ECO:0007669"/>
    <property type="project" value="UniProtKB-UniRule"/>
</dbReference>
<dbReference type="GO" id="GO:0034017">
    <property type="term" value="F:trans-2-decenoyl-acyl-carrier-protein isomerase activity"/>
    <property type="evidence" value="ECO:0007669"/>
    <property type="project" value="UniProtKB-UniRule"/>
</dbReference>
<dbReference type="GO" id="GO:0006636">
    <property type="term" value="P:unsaturated fatty acid biosynthetic process"/>
    <property type="evidence" value="ECO:0007669"/>
    <property type="project" value="UniProtKB-UniRule"/>
</dbReference>
<dbReference type="CDD" id="cd01287">
    <property type="entry name" value="FabA"/>
    <property type="match status" value="1"/>
</dbReference>
<dbReference type="Gene3D" id="3.10.129.10">
    <property type="entry name" value="Hotdog Thioesterase"/>
    <property type="match status" value="1"/>
</dbReference>
<dbReference type="HAMAP" id="MF_00405">
    <property type="entry name" value="FabA"/>
    <property type="match status" value="1"/>
</dbReference>
<dbReference type="InterPro" id="IPR010083">
    <property type="entry name" value="FabA"/>
</dbReference>
<dbReference type="InterPro" id="IPR013114">
    <property type="entry name" value="FabA_FabZ"/>
</dbReference>
<dbReference type="InterPro" id="IPR029069">
    <property type="entry name" value="HotDog_dom_sf"/>
</dbReference>
<dbReference type="NCBIfam" id="TIGR01749">
    <property type="entry name" value="fabA"/>
    <property type="match status" value="1"/>
</dbReference>
<dbReference type="NCBIfam" id="NF003509">
    <property type="entry name" value="PRK05174.1"/>
    <property type="match status" value="1"/>
</dbReference>
<dbReference type="PANTHER" id="PTHR30272">
    <property type="entry name" value="3-HYDROXYACYL-[ACYL-CARRIER-PROTEIN] DEHYDRATASE"/>
    <property type="match status" value="1"/>
</dbReference>
<dbReference type="PANTHER" id="PTHR30272:SF8">
    <property type="entry name" value="3-HYDROXYDECANOYL-[ACYL-CARRIER-PROTEIN] DEHYDRATASE"/>
    <property type="match status" value="1"/>
</dbReference>
<dbReference type="Pfam" id="PF07977">
    <property type="entry name" value="FabA"/>
    <property type="match status" value="1"/>
</dbReference>
<dbReference type="SUPFAM" id="SSF54637">
    <property type="entry name" value="Thioesterase/thiol ester dehydrase-isomerase"/>
    <property type="match status" value="1"/>
</dbReference>
<reference key="1">
    <citation type="journal article" date="2002" name="Nature">
        <title>Comparison of the genomes of two Xanthomonas pathogens with differing host specificities.</title>
        <authorList>
            <person name="da Silva A.C.R."/>
            <person name="Ferro J.A."/>
            <person name="Reinach F.C."/>
            <person name="Farah C.S."/>
            <person name="Furlan L.R."/>
            <person name="Quaggio R.B."/>
            <person name="Monteiro-Vitorello C.B."/>
            <person name="Van Sluys M.A."/>
            <person name="Almeida N.F. Jr."/>
            <person name="Alves L.M.C."/>
            <person name="do Amaral A.M."/>
            <person name="Bertolini M.C."/>
            <person name="Camargo L.E.A."/>
            <person name="Camarotte G."/>
            <person name="Cannavan F."/>
            <person name="Cardozo J."/>
            <person name="Chambergo F."/>
            <person name="Ciapina L.P."/>
            <person name="Cicarelli R.M.B."/>
            <person name="Coutinho L.L."/>
            <person name="Cursino-Santos J.R."/>
            <person name="El-Dorry H."/>
            <person name="Faria J.B."/>
            <person name="Ferreira A.J.S."/>
            <person name="Ferreira R.C.C."/>
            <person name="Ferro M.I.T."/>
            <person name="Formighieri E.F."/>
            <person name="Franco M.C."/>
            <person name="Greggio C.C."/>
            <person name="Gruber A."/>
            <person name="Katsuyama A.M."/>
            <person name="Kishi L.T."/>
            <person name="Leite R.P."/>
            <person name="Lemos E.G.M."/>
            <person name="Lemos M.V.F."/>
            <person name="Locali E.C."/>
            <person name="Machado M.A."/>
            <person name="Madeira A.M.B.N."/>
            <person name="Martinez-Rossi N.M."/>
            <person name="Martins E.C."/>
            <person name="Meidanis J."/>
            <person name="Menck C.F.M."/>
            <person name="Miyaki C.Y."/>
            <person name="Moon D.H."/>
            <person name="Moreira L.M."/>
            <person name="Novo M.T.M."/>
            <person name="Okura V.K."/>
            <person name="Oliveira M.C."/>
            <person name="Oliveira V.R."/>
            <person name="Pereira H.A."/>
            <person name="Rossi A."/>
            <person name="Sena J.A.D."/>
            <person name="Silva C."/>
            <person name="de Souza R.F."/>
            <person name="Spinola L.A.F."/>
            <person name="Takita M.A."/>
            <person name="Tamura R.E."/>
            <person name="Teixeira E.C."/>
            <person name="Tezza R.I.D."/>
            <person name="Trindade dos Santos M."/>
            <person name="Truffi D."/>
            <person name="Tsai S.M."/>
            <person name="White F.F."/>
            <person name="Setubal J.C."/>
            <person name="Kitajima J.P."/>
        </authorList>
    </citation>
    <scope>NUCLEOTIDE SEQUENCE [LARGE SCALE GENOMIC DNA]</scope>
    <source>
        <strain>ATCC 33913 / DSM 3586 / NCPPB 528 / LMG 568 / P 25</strain>
    </source>
</reference>
<sequence length="171" mass="19019">MTRQNAYSRDQLLASARGELFGPNSGRLPNDPMLMFDRITEINDNGGSHGKGLIRAELDIRPDLWFFNCHFIGDPVMPGCLGLDAMWQLTGFFLTWIGAPGRGRALGCGEVKFTGQVLPTATLVTYEIEISRVINRKLVMAQSDARMLVDGREIYAAKDLRVGMFTSTENF</sequence>
<gene>
    <name evidence="1" type="primary">fabA</name>
    <name type="ordered locus">XCC0582</name>
</gene>
<protein>
    <recommendedName>
        <fullName evidence="1">3-hydroxydecanoyl-[acyl-carrier-protein] dehydratase</fullName>
        <ecNumber evidence="1">4.2.1.59</ecNumber>
    </recommendedName>
    <alternativeName>
        <fullName evidence="1">3-hydroxyacyl-[acyl-carrier-protein] dehydratase FabA</fullName>
    </alternativeName>
    <alternativeName>
        <fullName evidence="1">Beta-hydroxydecanoyl thioester dehydrase</fullName>
    </alternativeName>
    <alternativeName>
        <fullName evidence="1">Trans-2-decenoyl-[acyl-carrier-protein] isomerase</fullName>
        <ecNumber evidence="1">5.3.3.14</ecNumber>
    </alternativeName>
</protein>
<evidence type="ECO:0000255" key="1">
    <source>
        <dbReference type="HAMAP-Rule" id="MF_00405"/>
    </source>
</evidence>
<organism>
    <name type="scientific">Xanthomonas campestris pv. campestris (strain ATCC 33913 / DSM 3586 / NCPPB 528 / LMG 568 / P 25)</name>
    <dbReference type="NCBI Taxonomy" id="190485"/>
    <lineage>
        <taxon>Bacteria</taxon>
        <taxon>Pseudomonadati</taxon>
        <taxon>Pseudomonadota</taxon>
        <taxon>Gammaproteobacteria</taxon>
        <taxon>Lysobacterales</taxon>
        <taxon>Lysobacteraceae</taxon>
        <taxon>Xanthomonas</taxon>
    </lineage>
</organism>
<proteinExistence type="inferred from homology"/>
<accession>Q8PCW9</accession>
<keyword id="KW-0963">Cytoplasm</keyword>
<keyword id="KW-0275">Fatty acid biosynthesis</keyword>
<keyword id="KW-0276">Fatty acid metabolism</keyword>
<keyword id="KW-0413">Isomerase</keyword>
<keyword id="KW-0444">Lipid biosynthesis</keyword>
<keyword id="KW-0443">Lipid metabolism</keyword>
<keyword id="KW-0456">Lyase</keyword>
<keyword id="KW-1185">Reference proteome</keyword>
<name>FABA_XANCP</name>
<feature type="chain" id="PRO_0000091623" description="3-hydroxydecanoyl-[acyl-carrier-protein] dehydratase">
    <location>
        <begin position="1"/>
        <end position="171"/>
    </location>
</feature>
<feature type="active site" evidence="1">
    <location>
        <position position="70"/>
    </location>
</feature>
<comment type="function">
    <text evidence="1">Necessary for the introduction of cis unsaturation into fatty acids. Catalyzes the dehydration of (3R)-3-hydroxydecanoyl-ACP to E-(2)-decenoyl-ACP and then its isomerization to Z-(3)-decenoyl-ACP. Can catalyze the dehydratase reaction for beta-hydroxyacyl-ACPs with saturated chain lengths up to 16:0, being most active on intermediate chain length.</text>
</comment>
<comment type="catalytic activity">
    <reaction evidence="1">
        <text>a (3R)-hydroxyacyl-[ACP] = a (2E)-enoyl-[ACP] + H2O</text>
        <dbReference type="Rhea" id="RHEA:13097"/>
        <dbReference type="Rhea" id="RHEA-COMP:9925"/>
        <dbReference type="Rhea" id="RHEA-COMP:9945"/>
        <dbReference type="ChEBI" id="CHEBI:15377"/>
        <dbReference type="ChEBI" id="CHEBI:78784"/>
        <dbReference type="ChEBI" id="CHEBI:78827"/>
        <dbReference type="EC" id="4.2.1.59"/>
    </reaction>
</comment>
<comment type="catalytic activity">
    <reaction evidence="1">
        <text>(3R)-hydroxydecanoyl-[ACP] = (2E)-decenoyl-[ACP] + H2O</text>
        <dbReference type="Rhea" id="RHEA:41860"/>
        <dbReference type="Rhea" id="RHEA-COMP:9638"/>
        <dbReference type="Rhea" id="RHEA-COMP:9639"/>
        <dbReference type="ChEBI" id="CHEBI:15377"/>
        <dbReference type="ChEBI" id="CHEBI:78466"/>
        <dbReference type="ChEBI" id="CHEBI:78467"/>
    </reaction>
</comment>
<comment type="catalytic activity">
    <reaction evidence="1">
        <text>(2E)-decenoyl-[ACP] = (3Z)-decenoyl-[ACP]</text>
        <dbReference type="Rhea" id="RHEA:23568"/>
        <dbReference type="Rhea" id="RHEA-COMP:9639"/>
        <dbReference type="Rhea" id="RHEA-COMP:9927"/>
        <dbReference type="ChEBI" id="CHEBI:78467"/>
        <dbReference type="ChEBI" id="CHEBI:78798"/>
        <dbReference type="EC" id="5.3.3.14"/>
    </reaction>
</comment>
<comment type="pathway">
    <text evidence="1">Lipid metabolism; fatty acid biosynthesis.</text>
</comment>
<comment type="subunit">
    <text evidence="1">Homodimer.</text>
</comment>
<comment type="subcellular location">
    <subcellularLocation>
        <location evidence="1">Cytoplasm</location>
    </subcellularLocation>
</comment>
<comment type="similarity">
    <text evidence="1">Belongs to the thioester dehydratase family. FabA subfamily.</text>
</comment>